<name>PLPHP_VIBAL</name>
<evidence type="ECO:0000255" key="1">
    <source>
        <dbReference type="HAMAP-Rule" id="MF_02087"/>
    </source>
</evidence>
<organism>
    <name type="scientific">Vibrio alginolyticus</name>
    <dbReference type="NCBI Taxonomy" id="663"/>
    <lineage>
        <taxon>Bacteria</taxon>
        <taxon>Pseudomonadati</taxon>
        <taxon>Pseudomonadota</taxon>
        <taxon>Gammaproteobacteria</taxon>
        <taxon>Vibrionales</taxon>
        <taxon>Vibrionaceae</taxon>
        <taxon>Vibrio</taxon>
    </lineage>
</organism>
<accession>P52055</accession>
<feature type="chain" id="PRO_0000163208" description="Pyridoxal phosphate homeostasis protein">
    <location>
        <begin position="1"/>
        <end position="233"/>
    </location>
</feature>
<feature type="modified residue" description="N6-(pyridoxal phosphate)lysine" evidence="1">
    <location>
        <position position="36"/>
    </location>
</feature>
<protein>
    <recommendedName>
        <fullName evidence="1">Pyridoxal phosphate homeostasis protein</fullName>
        <shortName evidence="1">PLP homeostasis protein</shortName>
    </recommendedName>
</protein>
<sequence length="233" mass="26049">MSSIQQNIEHITSQIRYDEQKCGRTPESVQLLAVSKTKPVEAILEAYQAGQTAFGENYVQEGVSKVQHFAEHYPDNRIEWHFIGPIQSNKSRLVAEHFDWVHTIDRTKIAQRLNDQRPSELKPLQVLIQVNTSGEASKSGVTEAEVFELAELISRLPNLTLRGLMSIPANVSDYESQLHEFQKLATLKQTLEAQFPEIDTLSMGMSGDMTAAIEAGSTMVRIGTAIFGARDYS</sequence>
<keyword id="KW-0663">Pyridoxal phosphate</keyword>
<reference key="1">
    <citation type="journal article" date="1996" name="Biochim. Biophys. Acta">
        <title>Cloning and sequencing of novel genes from Vibrio alginolyticus that support the growth of K+ uptake-deficient mutant of Escherichia coli.</title>
        <authorList>
            <person name="Nakamura T."/>
            <person name="Katoh Y."/>
            <person name="Shimizu Y."/>
            <person name="Matsuba Y."/>
            <person name="Unemoto T."/>
        </authorList>
    </citation>
    <scope>NUCLEOTIDE SEQUENCE [GENOMIC DNA]</scope>
    <source>
        <strain>138-2</strain>
    </source>
</reference>
<dbReference type="EMBL" id="D50472">
    <property type="protein sequence ID" value="BAA09062.1"/>
    <property type="molecule type" value="Genomic_DNA"/>
</dbReference>
<dbReference type="RefSeq" id="WP_054575409.1">
    <property type="nucleotide sequence ID" value="NZ_VTYF01000017.1"/>
</dbReference>
<dbReference type="SMR" id="P52055"/>
<dbReference type="STRING" id="663.BAU10_12655"/>
<dbReference type="GeneID" id="57839639"/>
<dbReference type="PATRIC" id="fig|663.76.peg.2528"/>
<dbReference type="eggNOG" id="COG0325">
    <property type="taxonomic scope" value="Bacteria"/>
</dbReference>
<dbReference type="GO" id="GO:0030170">
    <property type="term" value="F:pyridoxal phosphate binding"/>
    <property type="evidence" value="ECO:0007669"/>
    <property type="project" value="UniProtKB-UniRule"/>
</dbReference>
<dbReference type="CDD" id="cd06824">
    <property type="entry name" value="PLPDE_III_Yggs_like"/>
    <property type="match status" value="1"/>
</dbReference>
<dbReference type="FunFam" id="3.20.20.10:FF:000004">
    <property type="entry name" value="Pyridoxal phosphate homeostasis protein"/>
    <property type="match status" value="1"/>
</dbReference>
<dbReference type="Gene3D" id="3.20.20.10">
    <property type="entry name" value="Alanine racemase"/>
    <property type="match status" value="1"/>
</dbReference>
<dbReference type="HAMAP" id="MF_02087">
    <property type="entry name" value="PLP_homeostasis"/>
    <property type="match status" value="1"/>
</dbReference>
<dbReference type="InterPro" id="IPR001608">
    <property type="entry name" value="Ala_racemase_N"/>
</dbReference>
<dbReference type="InterPro" id="IPR029066">
    <property type="entry name" value="PLP-binding_barrel"/>
</dbReference>
<dbReference type="InterPro" id="IPR011078">
    <property type="entry name" value="PyrdxlP_homeostasis"/>
</dbReference>
<dbReference type="NCBIfam" id="TIGR00044">
    <property type="entry name" value="YggS family pyridoxal phosphate-dependent enzyme"/>
    <property type="match status" value="1"/>
</dbReference>
<dbReference type="PANTHER" id="PTHR10146">
    <property type="entry name" value="PROLINE SYNTHETASE CO-TRANSCRIBED BACTERIAL HOMOLOG PROTEIN"/>
    <property type="match status" value="1"/>
</dbReference>
<dbReference type="PANTHER" id="PTHR10146:SF14">
    <property type="entry name" value="PYRIDOXAL PHOSPHATE HOMEOSTASIS PROTEIN"/>
    <property type="match status" value="1"/>
</dbReference>
<dbReference type="Pfam" id="PF01168">
    <property type="entry name" value="Ala_racemase_N"/>
    <property type="match status" value="1"/>
</dbReference>
<dbReference type="PIRSF" id="PIRSF004848">
    <property type="entry name" value="YBL036c_PLPDEIII"/>
    <property type="match status" value="1"/>
</dbReference>
<dbReference type="SUPFAM" id="SSF51419">
    <property type="entry name" value="PLP-binding barrel"/>
    <property type="match status" value="1"/>
</dbReference>
<dbReference type="PROSITE" id="PS01211">
    <property type="entry name" value="UPF0001"/>
    <property type="match status" value="1"/>
</dbReference>
<comment type="function">
    <text evidence="1">Pyridoxal 5'-phosphate (PLP)-binding protein, which is involved in PLP homeostasis.</text>
</comment>
<comment type="similarity">
    <text evidence="1">Belongs to the pyridoxal phosphate-binding protein YggS/PROSC family.</text>
</comment>
<proteinExistence type="inferred from homology"/>